<proteinExistence type="evidence at protein level"/>
<name>T5G1A_AGEOR</name>
<reference key="1">
    <citation type="journal article" date="2005" name="Proteins">
        <title>A novel strategy for the identification of toxinlike structures in spider venom.</title>
        <authorList>
            <person name="Kozlov S.A."/>
            <person name="Malyavka A."/>
            <person name="McCutchen B."/>
            <person name="Lu A."/>
            <person name="Schepers E."/>
            <person name="Herrmann R."/>
            <person name="Grishin E.V."/>
        </authorList>
    </citation>
    <scope>NUCLEOTIDE SEQUENCE [MRNA]</scope>
    <source>
        <tissue>Venom gland</tissue>
    </source>
</reference>
<reference key="2">
    <citation type="journal article" date="2010" name="J. Biol. Chem.">
        <title>Unique bell-shaped voltage-dependent modulation of Na+ channel gating by novel insect-selective toxins from the spider Agelena orientalis.</title>
        <authorList>
            <person name="Billen B."/>
            <person name="Vassilevski A."/>
            <person name="Nikolsky A."/>
            <person name="Debaveye S."/>
            <person name="Tytgat J."/>
            <person name="Grishin E."/>
        </authorList>
    </citation>
    <scope>PROTEIN SEQUENCE OF 34-69</scope>
    <scope>FUNCTION</scope>
    <scope>SUBCELLULAR LOCATION</scope>
    <scope>TISSUE SPECIFICITY</scope>
    <scope>MASS SPECTROMETRY</scope>
    <scope>AMIDATION AT ASN-69</scope>
    <source>
        <tissue>Venom</tissue>
    </source>
</reference>
<protein>
    <recommendedName>
        <fullName>Mu-agatoxin-Ao1a</fullName>
        <shortName>Mu-AGTX-Ao1a</shortName>
    </recommendedName>
    <alternativeName>
        <fullName evidence="4">Beta/delta-agatoxin-5</fullName>
    </alternativeName>
    <alternativeName>
        <fullName evidence="6">Mu-2Aaga_13</fullName>
    </alternativeName>
</protein>
<evidence type="ECO:0000250" key="1"/>
<evidence type="ECO:0000255" key="2"/>
<evidence type="ECO:0000269" key="3">
    <source>
    </source>
</evidence>
<evidence type="ECO:0000303" key="4">
    <source>
    </source>
</evidence>
<evidence type="ECO:0000305" key="5"/>
<evidence type="ECO:0000312" key="6">
    <source>
        <dbReference type="EMBL" id="AAU87897.1"/>
    </source>
</evidence>
<comment type="function">
    <text evidence="3">Insecticidal neurotoxin that modulates the insect Nav channel (DmNaV1/tipE (para/tipE)) in a unique manner, with both the activation and inactivation processes being affected. The voltage dependence of activation is shifted toward more hyperpolarized potentials (analogous to site 4 toxins) and a non-inactivating persistent sodium current is induced (site 3-like action). Interestingly, both effects take place in a voltage-dependent manner, producing a bell-shaped curve between -80 and 0 mV.</text>
</comment>
<comment type="subcellular location">
    <subcellularLocation>
        <location evidence="3">Secreted</location>
    </subcellularLocation>
</comment>
<comment type="tissue specificity">
    <text evidence="3">Expressed by the venom gland.</text>
</comment>
<comment type="domain">
    <text evidence="1">The presence of a 'disulfide through disulfide knot' structurally defines this protein as a knottin.</text>
</comment>
<comment type="mass spectrometry"/>
<comment type="miscellaneous">
    <text evidence="1">Negative results: does not affect mammalian sodium channels (Nav).</text>
</comment>
<comment type="similarity">
    <text evidence="5">Belongs to the neurotoxin 07 (Beta/delta-agtx) family. 04 (aga-5) subfamily.</text>
</comment>
<feature type="signal peptide" evidence="2">
    <location>
        <begin position="1"/>
        <end position="20"/>
    </location>
</feature>
<feature type="propeptide" id="PRO_5000093677" evidence="3">
    <location>
        <begin position="21"/>
        <end position="33"/>
    </location>
</feature>
<feature type="chain" id="PRO_5000093678" description="Mu-agatoxin-Ao1a">
    <location>
        <begin position="34"/>
        <end position="69"/>
    </location>
</feature>
<feature type="modified residue" description="Asparagine amide" evidence="3">
    <location>
        <position position="69"/>
    </location>
</feature>
<feature type="disulfide bond" evidence="1">
    <location>
        <begin position="35"/>
        <end position="50"/>
    </location>
</feature>
<feature type="disulfide bond" evidence="1">
    <location>
        <begin position="42"/>
        <end position="55"/>
    </location>
</feature>
<feature type="disulfide bond" evidence="1">
    <location>
        <begin position="49"/>
        <end position="65"/>
    </location>
</feature>
<feature type="disulfide bond" evidence="1">
    <location>
        <begin position="57"/>
        <end position="63"/>
    </location>
</feature>
<accession>Q5Y4U7</accession>
<dbReference type="EMBL" id="AY681337">
    <property type="protein sequence ID" value="AAU87897.1"/>
    <property type="molecule type" value="mRNA"/>
</dbReference>
<dbReference type="SMR" id="Q5Y4U7"/>
<dbReference type="ArachnoServer" id="AS000075">
    <property type="toxin name" value="mu-agatoxin-Ao1a"/>
</dbReference>
<dbReference type="GO" id="GO:0005576">
    <property type="term" value="C:extracellular region"/>
    <property type="evidence" value="ECO:0007669"/>
    <property type="project" value="UniProtKB-SubCell"/>
</dbReference>
<dbReference type="GO" id="GO:0008200">
    <property type="term" value="F:ion channel inhibitor activity"/>
    <property type="evidence" value="ECO:0007669"/>
    <property type="project" value="InterPro"/>
</dbReference>
<dbReference type="GO" id="GO:0017080">
    <property type="term" value="F:sodium channel regulator activity"/>
    <property type="evidence" value="ECO:0007669"/>
    <property type="project" value="UniProtKB-KW"/>
</dbReference>
<dbReference type="GO" id="GO:0090729">
    <property type="term" value="F:toxin activity"/>
    <property type="evidence" value="ECO:0007669"/>
    <property type="project" value="UniProtKB-KW"/>
</dbReference>
<dbReference type="CDD" id="cd12960">
    <property type="entry name" value="Spider_toxin"/>
    <property type="match status" value="1"/>
</dbReference>
<dbReference type="InterPro" id="IPR016328">
    <property type="entry name" value="Beta/delta-agatoxin_fam"/>
</dbReference>
<dbReference type="InterPro" id="IPR004169">
    <property type="entry name" value="Spidertoxin"/>
</dbReference>
<dbReference type="Pfam" id="PF05980">
    <property type="entry name" value="Toxin_7"/>
    <property type="match status" value="1"/>
</dbReference>
<dbReference type="SUPFAM" id="SSF57059">
    <property type="entry name" value="omega toxin-like"/>
    <property type="match status" value="1"/>
</dbReference>
<dbReference type="PROSITE" id="PS60015">
    <property type="entry name" value="MU_AGATOXIN"/>
    <property type="match status" value="1"/>
</dbReference>
<keyword id="KW-0027">Amidation</keyword>
<keyword id="KW-0903">Direct protein sequencing</keyword>
<keyword id="KW-1015">Disulfide bond</keyword>
<keyword id="KW-0872">Ion channel impairing toxin</keyword>
<keyword id="KW-0960">Knottin</keyword>
<keyword id="KW-0528">Neurotoxin</keyword>
<keyword id="KW-0964">Secreted</keyword>
<keyword id="KW-0732">Signal</keyword>
<keyword id="KW-0800">Toxin</keyword>
<keyword id="KW-0738">Voltage-gated sodium channel impairing toxin</keyword>
<sequence>MKAIIFFCFLSVMVFIVAEASSLEALKIFEGERDCVGENGRCRDWYNDCCDGFYCSCRQPPYCICRNNNG</sequence>
<organism>
    <name type="scientific">Agelena orientalis</name>
    <name type="common">Funnel-web spider</name>
    <dbReference type="NCBI Taxonomy" id="293813"/>
    <lineage>
        <taxon>Eukaryota</taxon>
        <taxon>Metazoa</taxon>
        <taxon>Ecdysozoa</taxon>
        <taxon>Arthropoda</taxon>
        <taxon>Chelicerata</taxon>
        <taxon>Arachnida</taxon>
        <taxon>Araneae</taxon>
        <taxon>Araneomorphae</taxon>
        <taxon>Entelegynae</taxon>
        <taxon>Agelenidae</taxon>
        <taxon>Agelena</taxon>
    </lineage>
</organism>